<reference key="1">
    <citation type="journal article" date="1993" name="J. Bacteriol.">
        <title>Metabolism of dibenzothiophene and naphthalene in Pseudomonas strains: complete DNA sequence of an upper naphthalene catabolic pathway.</title>
        <authorList>
            <person name="Denome S.A."/>
            <person name="Stanley D.C."/>
            <person name="Olson E.S."/>
            <person name="Young K.D."/>
        </authorList>
    </citation>
    <scope>NUCLEOTIDE SEQUENCE [GENOMIC DNA]</scope>
    <scope>FUNCTION</scope>
    <scope>DISRUPTION PHENOTYPE</scope>
    <scope>PATHWAY</scope>
    <scope>SUBUNIT</scope>
    <source>
        <strain>C18</strain>
        <plasmid>unnamed</plasmid>
    </source>
</reference>
<reference key="2">
    <citation type="journal article" date="2006" name="J. Bacteriol.">
        <title>Structural basis for regioselectivity and stereoselectivity of product formation by naphthalene 1,2-dioxygenase.</title>
        <authorList>
            <person name="Ferraro D.J."/>
            <person name="Okerlund A.L."/>
            <person name="Mowers J.C."/>
            <person name="Ramaswamy S."/>
        </authorList>
    </citation>
    <scope>X-RAY CRYSTALLOGRAPHY (1.50 ANGSTROMS) OF WILD-TYPE AND MUTANT VAL-352 IN COMPLEX WITH SUBSTRATE ANALOG; IRON ION AND IRON-SULFUR (2FE-2S)</scope>
    <scope>COFACTOR</scope>
    <scope>MUTAGENESIS OF PHE-352</scope>
    <scope>SUBUNIT</scope>
</reference>
<reference key="3">
    <citation type="submission" date="2012-10" db="PDB data bank">
        <title>Naphthalene 1,2-Dioxygenase bound to thioanisole.</title>
        <authorList>
            <person name="Ferraro D.J."/>
            <person name="Ramaswamy S."/>
        </authorList>
    </citation>
    <scope>X-RAY CRYSTALLOGRAPHY (1.30 ANGSTROMS) IN COMPLEX WITH IRON; IRON-SULFUR (2FE-2S) AND SUBSTRATE ANALOGS</scope>
    <scope>COFACTOR</scope>
    <scope>SUBUNIT</scope>
</reference>
<protein>
    <recommendedName>
        <fullName evidence="1">Naphthalene 1,2-dioxygenase system, large oxygenase component</fullName>
        <ecNumber evidence="1">1.14.12.12</ecNumber>
    </recommendedName>
    <alternativeName>
        <fullName evidence="1">ISP NAP</fullName>
    </alternativeName>
    <alternativeName>
        <fullName evidence="1">Naphthalene 1,2-dioxygenase ISP alpha</fullName>
    </alternativeName>
    <alternativeName>
        <fullName evidence="6">Naphthalene 1,2-dioxygenase subunit alpha</fullName>
        <shortName evidence="1">ND subunit alpha</shortName>
        <shortName evidence="1">NDO subunit alpha</shortName>
    </alternativeName>
</protein>
<sequence>MNYNNKILVSESGLSQKHLIHGDEELFQHELKTIFARNWLFLTHDSLIPAPGDYVTAKMGIDEVIVSRQNDGSIRAFLNVCRHRGKTLVSVEAGNAKGFVCSYHGWGFGSNGELQSVPFEKDLYGESLNKKCLGLKEVARVESFHGFIYGCFDQEAPPLMDYLGDAAWYLEPMFKHSGGLELVGPPGKVVIKANWKAPAENFVGDAYHVGWTHASSLRSGESIFSSLAGNAALPPEGAGLQMTSKYGSGMGVLWDGYSGVHSADLVPELMAFGGAKQERLNKEIGDVRARIYRSHLNCTVFPNNSMLTCSGVFKVWNPIDANTTEVWTYAIVEKDMPEDLKRRLADSVQRTFGPAGFWESDDNDNMETASQNGKKYQSRDSDLLSNLGFGEDVYGDAVYPGVVGKSAIGETSYRGFYRAYQAHVSSSNWAEFEHASSTWHTELTKTTDR</sequence>
<gene>
    <name evidence="6" type="primary">doxB</name>
</gene>
<accession>P0A111</accession>
<accession>O07830</accession>
<accession>O33461</accession>
<accession>P23094</accession>
<accession>Q52124</accession>
<keyword id="KW-0001">2Fe-2S</keyword>
<keyword id="KW-0002">3D-structure</keyword>
<keyword id="KW-0058">Aromatic hydrocarbons catabolism</keyword>
<keyword id="KW-0223">Dioxygenase</keyword>
<keyword id="KW-0408">Iron</keyword>
<keyword id="KW-0411">Iron-sulfur</keyword>
<keyword id="KW-0479">Metal-binding</keyword>
<keyword id="KW-0520">NAD</keyword>
<keyword id="KW-0560">Oxidoreductase</keyword>
<keyword id="KW-0614">Plasmid</keyword>
<comment type="function">
    <text evidence="4">Component of the naphthalene dioxygenase (NDO) multicomponent enzyme system which catalyzes the incorporation of both atoms of molecular oxygen into naphthalene to form cis-(1R,2S)-dihydroxy-1,2-dihydronaphthalene. The alpha subunit has a catalytic role in the holoenzyme.</text>
</comment>
<comment type="catalytic activity">
    <reaction evidence="1">
        <text>naphthalene + NADH + O2 + H(+) = (1R,2S)-1,2-dihydronaphthalene-1,2-diol + NAD(+)</text>
        <dbReference type="Rhea" id="RHEA:19173"/>
        <dbReference type="ChEBI" id="CHEBI:15378"/>
        <dbReference type="ChEBI" id="CHEBI:15379"/>
        <dbReference type="ChEBI" id="CHEBI:16482"/>
        <dbReference type="ChEBI" id="CHEBI:44343"/>
        <dbReference type="ChEBI" id="CHEBI:57540"/>
        <dbReference type="ChEBI" id="CHEBI:57945"/>
        <dbReference type="EC" id="1.14.12.12"/>
    </reaction>
</comment>
<comment type="cofactor">
    <cofactor evidence="3 5">
        <name>[2Fe-2S] cluster</name>
        <dbReference type="ChEBI" id="CHEBI:190135"/>
    </cofactor>
    <text evidence="3 5">Binds 1 [2Fe-2S] cluster per subunit.</text>
</comment>
<comment type="cofactor">
    <cofactor evidence="3 5">
        <name>Fe(2+)</name>
        <dbReference type="ChEBI" id="CHEBI:29033"/>
    </cofactor>
    <text evidence="3 5">Binds 1 Fe(2+) ion per subunit.</text>
</comment>
<comment type="pathway">
    <text evidence="8">Aromatic compound metabolism; naphthalene degradation.</text>
</comment>
<comment type="subunit">
    <text evidence="3 8 9">The naphthalene dioxygenase (NDO) multicomponent enzyme system is composed of an electron transfer component and a dioxygenase component (iron sulfur protein (ISP)). The electron transfer component is composed of a ferredoxin reductase and a ferredoxin (DoxA), and the dioxygenase component is formed of a heterohexamer (trimer of heterodimers) of three large alpha subunits (DoxB) and three small beta subunits (DoxD).</text>
</comment>
<comment type="disruption phenotype">
    <text evidence="4">Cells lacking this gene are unable to degrade naphthalene.</text>
</comment>
<comment type="miscellaneous">
    <text evidence="8">Encoded on an unnamed 75 kb plasmid.</text>
</comment>
<comment type="similarity">
    <text evidence="7">Belongs to the bacterial ring-hydroxylating dioxygenase alpha subunit family.</text>
</comment>
<organism>
    <name type="scientific">Pseudomonas sp. (strain C18)</name>
    <dbReference type="NCBI Taxonomy" id="69011"/>
    <lineage>
        <taxon>Bacteria</taxon>
        <taxon>Pseudomonadati</taxon>
        <taxon>Pseudomonadota</taxon>
    </lineage>
</organism>
<dbReference type="EC" id="1.14.12.12" evidence="1"/>
<dbReference type="EMBL" id="M60405">
    <property type="protein sequence ID" value="AAA16125.1"/>
    <property type="molecule type" value="Genomic_DNA"/>
</dbReference>
<dbReference type="PIR" id="S27632">
    <property type="entry name" value="S27632"/>
</dbReference>
<dbReference type="PDB" id="2HMJ">
    <property type="method" value="X-ray"/>
    <property type="resolution" value="1.50 A"/>
    <property type="chains" value="A=1-449"/>
</dbReference>
<dbReference type="PDB" id="2HMK">
    <property type="method" value="X-ray"/>
    <property type="resolution" value="1.65 A"/>
    <property type="chains" value="A=1-449"/>
</dbReference>
<dbReference type="PDB" id="2HML">
    <property type="method" value="X-ray"/>
    <property type="resolution" value="1.80 A"/>
    <property type="chains" value="A=1-449"/>
</dbReference>
<dbReference type="PDB" id="2HMM">
    <property type="method" value="X-ray"/>
    <property type="resolution" value="1.60 A"/>
    <property type="chains" value="A=1-449"/>
</dbReference>
<dbReference type="PDB" id="2HMN">
    <property type="method" value="X-ray"/>
    <property type="resolution" value="1.70 A"/>
    <property type="chains" value="A=1-449"/>
</dbReference>
<dbReference type="PDB" id="2HMO">
    <property type="method" value="X-ray"/>
    <property type="resolution" value="1.60 A"/>
    <property type="chains" value="A=1-449"/>
</dbReference>
<dbReference type="PDB" id="4HJL">
    <property type="method" value="X-ray"/>
    <property type="resolution" value="1.50 A"/>
    <property type="chains" value="A=1-446"/>
</dbReference>
<dbReference type="PDB" id="4HKV">
    <property type="method" value="X-ray"/>
    <property type="resolution" value="1.65 A"/>
    <property type="chains" value="A=1-449"/>
</dbReference>
<dbReference type="PDB" id="4HM0">
    <property type="method" value="X-ray"/>
    <property type="resolution" value="1.80 A"/>
    <property type="chains" value="A=1-449"/>
</dbReference>
<dbReference type="PDB" id="4HM1">
    <property type="method" value="X-ray"/>
    <property type="resolution" value="1.50 A"/>
    <property type="chains" value="A=1-449"/>
</dbReference>
<dbReference type="PDB" id="4HM2">
    <property type="method" value="X-ray"/>
    <property type="resolution" value="1.60 A"/>
    <property type="chains" value="A=1-449"/>
</dbReference>
<dbReference type="PDB" id="4HM3">
    <property type="method" value="X-ray"/>
    <property type="resolution" value="1.50 A"/>
    <property type="chains" value="A=1-449"/>
</dbReference>
<dbReference type="PDB" id="4HM4">
    <property type="method" value="X-ray"/>
    <property type="resolution" value="1.50 A"/>
    <property type="chains" value="A=1-449"/>
</dbReference>
<dbReference type="PDB" id="4HM5">
    <property type="method" value="X-ray"/>
    <property type="resolution" value="1.50 A"/>
    <property type="chains" value="A=1-449"/>
</dbReference>
<dbReference type="PDB" id="4HM6">
    <property type="method" value="X-ray"/>
    <property type="resolution" value="1.50 A"/>
    <property type="chains" value="A=1-449"/>
</dbReference>
<dbReference type="PDB" id="4HM7">
    <property type="method" value="X-ray"/>
    <property type="resolution" value="1.50 A"/>
    <property type="chains" value="A=1-449"/>
</dbReference>
<dbReference type="PDB" id="4HM8">
    <property type="method" value="X-ray"/>
    <property type="resolution" value="1.30 A"/>
    <property type="chains" value="A=1-449"/>
</dbReference>
<dbReference type="PDBsum" id="2HMJ"/>
<dbReference type="PDBsum" id="2HMK"/>
<dbReference type="PDBsum" id="2HML"/>
<dbReference type="PDBsum" id="2HMM"/>
<dbReference type="PDBsum" id="2HMN"/>
<dbReference type="PDBsum" id="2HMO"/>
<dbReference type="PDBsum" id="4HJL"/>
<dbReference type="PDBsum" id="4HKV"/>
<dbReference type="PDBsum" id="4HM0"/>
<dbReference type="PDBsum" id="4HM1"/>
<dbReference type="PDBsum" id="4HM2"/>
<dbReference type="PDBsum" id="4HM3"/>
<dbReference type="PDBsum" id="4HM4"/>
<dbReference type="PDBsum" id="4HM5"/>
<dbReference type="PDBsum" id="4HM6"/>
<dbReference type="PDBsum" id="4HM7"/>
<dbReference type="PDBsum" id="4HM8"/>
<dbReference type="SMR" id="P0A111"/>
<dbReference type="BRENDA" id="1.14.12.12">
    <property type="organism ID" value="5085"/>
</dbReference>
<dbReference type="UniPathway" id="UPA00082"/>
<dbReference type="EvolutionaryTrace" id="P0A111"/>
<dbReference type="GO" id="GO:0051537">
    <property type="term" value="F:2 iron, 2 sulfur cluster binding"/>
    <property type="evidence" value="ECO:0000314"/>
    <property type="project" value="UniProtKB"/>
</dbReference>
<dbReference type="GO" id="GO:0005506">
    <property type="term" value="F:iron ion binding"/>
    <property type="evidence" value="ECO:0000314"/>
    <property type="project" value="UniProtKB"/>
</dbReference>
<dbReference type="GO" id="GO:0018625">
    <property type="term" value="F:naphthalene 1,2-dioxygenase activity"/>
    <property type="evidence" value="ECO:0000250"/>
    <property type="project" value="UniProtKB"/>
</dbReference>
<dbReference type="GO" id="GO:0009056">
    <property type="term" value="P:catabolic process"/>
    <property type="evidence" value="ECO:0007669"/>
    <property type="project" value="UniProtKB-KW"/>
</dbReference>
<dbReference type="CDD" id="cd08881">
    <property type="entry name" value="RHO_alpha_C_NDO-like"/>
    <property type="match status" value="1"/>
</dbReference>
<dbReference type="CDD" id="cd03469">
    <property type="entry name" value="Rieske_RO_Alpha_N"/>
    <property type="match status" value="1"/>
</dbReference>
<dbReference type="FunFam" id="2.102.10.10:FF:000004">
    <property type="entry name" value="3-phenylpropionate/cinnamic acid dioxygenase subunit alpha"/>
    <property type="match status" value="1"/>
</dbReference>
<dbReference type="FunFam" id="3.90.380.10:FF:000007">
    <property type="entry name" value="Naphthalene 1,2-dioxygenase system, large oxygenase component"/>
    <property type="match status" value="1"/>
</dbReference>
<dbReference type="Gene3D" id="3.90.380.10">
    <property type="entry name" value="Naphthalene 1,2-dioxygenase Alpha Subunit, Chain A, domain 1"/>
    <property type="match status" value="1"/>
</dbReference>
<dbReference type="Gene3D" id="2.102.10.10">
    <property type="entry name" value="Rieske [2Fe-2S] iron-sulphur domain"/>
    <property type="match status" value="1"/>
</dbReference>
<dbReference type="InterPro" id="IPR043266">
    <property type="entry name" value="RHO_NdoB-like_C"/>
</dbReference>
<dbReference type="InterPro" id="IPR017941">
    <property type="entry name" value="Rieske_2Fe-2S"/>
</dbReference>
<dbReference type="InterPro" id="IPR036922">
    <property type="entry name" value="Rieske_2Fe-2S_sf"/>
</dbReference>
<dbReference type="InterPro" id="IPR015881">
    <property type="entry name" value="Ring-hydroxy_dOase_2Fe2S_BS"/>
</dbReference>
<dbReference type="InterPro" id="IPR015879">
    <property type="entry name" value="Ring_hydroxy_dOase_asu_C_dom"/>
</dbReference>
<dbReference type="InterPro" id="IPR001663">
    <property type="entry name" value="Rng_hydr_dOase-A"/>
</dbReference>
<dbReference type="PANTHER" id="PTHR43756:SF1">
    <property type="entry name" value="3-PHENYLPROPIONATE_CINNAMIC ACID DIOXYGENASE SUBUNIT ALPHA"/>
    <property type="match status" value="1"/>
</dbReference>
<dbReference type="PANTHER" id="PTHR43756">
    <property type="entry name" value="CHOLINE MONOOXYGENASE, CHLOROPLASTIC"/>
    <property type="match status" value="1"/>
</dbReference>
<dbReference type="Pfam" id="PF00355">
    <property type="entry name" value="Rieske"/>
    <property type="match status" value="1"/>
</dbReference>
<dbReference type="Pfam" id="PF00848">
    <property type="entry name" value="Ring_hydroxyl_A"/>
    <property type="match status" value="1"/>
</dbReference>
<dbReference type="PRINTS" id="PR00090">
    <property type="entry name" value="RNGDIOXGNASE"/>
</dbReference>
<dbReference type="SUPFAM" id="SSF55961">
    <property type="entry name" value="Bet v1-like"/>
    <property type="match status" value="1"/>
</dbReference>
<dbReference type="SUPFAM" id="SSF50022">
    <property type="entry name" value="ISP domain"/>
    <property type="match status" value="1"/>
</dbReference>
<dbReference type="PROSITE" id="PS51296">
    <property type="entry name" value="RIESKE"/>
    <property type="match status" value="1"/>
</dbReference>
<dbReference type="PROSITE" id="PS00570">
    <property type="entry name" value="RING_HYDROXYL_ALPHA"/>
    <property type="match status" value="1"/>
</dbReference>
<geneLocation type="plasmid">
    <name>unnamed</name>
</geneLocation>
<evidence type="ECO:0000250" key="1">
    <source>
        <dbReference type="UniProtKB" id="P0A110"/>
    </source>
</evidence>
<evidence type="ECO:0000255" key="2">
    <source>
        <dbReference type="PROSITE-ProRule" id="PRU00628"/>
    </source>
</evidence>
<evidence type="ECO:0000269" key="3">
    <source>
    </source>
</evidence>
<evidence type="ECO:0000269" key="4">
    <source>
    </source>
</evidence>
<evidence type="ECO:0000269" key="5">
    <source ref="3"/>
</evidence>
<evidence type="ECO:0000303" key="6">
    <source>
    </source>
</evidence>
<evidence type="ECO:0000305" key="7"/>
<evidence type="ECO:0000305" key="8">
    <source>
    </source>
</evidence>
<evidence type="ECO:0000305" key="9">
    <source ref="3"/>
</evidence>
<evidence type="ECO:0007744" key="10">
    <source>
        <dbReference type="PDB" id="2HMJ"/>
    </source>
</evidence>
<evidence type="ECO:0007744" key="11">
    <source>
        <dbReference type="PDB" id="2HMK"/>
    </source>
</evidence>
<evidence type="ECO:0007744" key="12">
    <source>
        <dbReference type="PDB" id="2HML"/>
    </source>
</evidence>
<evidence type="ECO:0007744" key="13">
    <source>
        <dbReference type="PDB" id="2HMM"/>
    </source>
</evidence>
<evidence type="ECO:0007744" key="14">
    <source>
        <dbReference type="PDB" id="2HMN"/>
    </source>
</evidence>
<evidence type="ECO:0007744" key="15">
    <source>
        <dbReference type="PDB" id="2HMO"/>
    </source>
</evidence>
<evidence type="ECO:0007744" key="16">
    <source>
        <dbReference type="PDB" id="4HJL"/>
    </source>
</evidence>
<evidence type="ECO:0007744" key="17">
    <source>
        <dbReference type="PDB" id="4HKV"/>
    </source>
</evidence>
<evidence type="ECO:0007744" key="18">
    <source>
        <dbReference type="PDB" id="4HM0"/>
    </source>
</evidence>
<evidence type="ECO:0007744" key="19">
    <source>
        <dbReference type="PDB" id="4HM1"/>
    </source>
</evidence>
<evidence type="ECO:0007744" key="20">
    <source>
        <dbReference type="PDB" id="4HM2"/>
    </source>
</evidence>
<evidence type="ECO:0007744" key="21">
    <source>
        <dbReference type="PDB" id="4HM3"/>
    </source>
</evidence>
<evidence type="ECO:0007744" key="22">
    <source>
        <dbReference type="PDB" id="4HM4"/>
    </source>
</evidence>
<evidence type="ECO:0007744" key="23">
    <source>
        <dbReference type="PDB" id="4HM5"/>
    </source>
</evidence>
<evidence type="ECO:0007744" key="24">
    <source>
        <dbReference type="PDB" id="4HM6"/>
    </source>
</evidence>
<evidence type="ECO:0007744" key="25">
    <source>
        <dbReference type="PDB" id="4HM7"/>
    </source>
</evidence>
<evidence type="ECO:0007744" key="26">
    <source>
        <dbReference type="PDB" id="4HM8"/>
    </source>
</evidence>
<evidence type="ECO:0007829" key="27">
    <source>
        <dbReference type="PDB" id="4HM8"/>
    </source>
</evidence>
<name>NDOB_PSEU8</name>
<proteinExistence type="evidence at protein level"/>
<feature type="chain" id="PRO_0000085054" description="Naphthalene 1,2-dioxygenase system, large oxygenase component">
    <location>
        <begin position="1"/>
        <end position="449"/>
    </location>
</feature>
<feature type="domain" description="Rieske" evidence="2">
    <location>
        <begin position="39"/>
        <end position="137"/>
    </location>
</feature>
<feature type="binding site" evidence="3 5 10 11 12 13 14 15 16 17 18 19 20 21 22 23 24 25 26">
    <location>
        <position position="81"/>
    </location>
    <ligand>
        <name>[2Fe-2S] cluster</name>
        <dbReference type="ChEBI" id="CHEBI:190135"/>
    </ligand>
</feature>
<feature type="binding site" evidence="3 5 10 11 12 13 14 15 16 17 18 19 20 21 22 23 24 25 26">
    <location>
        <position position="83"/>
    </location>
    <ligand>
        <name>[2Fe-2S] cluster</name>
        <dbReference type="ChEBI" id="CHEBI:190135"/>
    </ligand>
</feature>
<feature type="binding site" evidence="3 5 10 11 12 13 14 15 16 17 18 19 20 21 22 23 24 25 26">
    <location>
        <position position="101"/>
    </location>
    <ligand>
        <name>[2Fe-2S] cluster</name>
        <dbReference type="ChEBI" id="CHEBI:190135"/>
    </ligand>
</feature>
<feature type="binding site" evidence="3 5 10 11 12 13 14 15 16 17 18 19 20 21 22 23 24 25 26">
    <location>
        <position position="104"/>
    </location>
    <ligand>
        <name>[2Fe-2S] cluster</name>
        <dbReference type="ChEBI" id="CHEBI:190135"/>
    </ligand>
</feature>
<feature type="binding site" evidence="3 5 10 11 12 13 14 15 16 17 18 19 20 21 22 23 24 25 26">
    <location>
        <position position="208"/>
    </location>
    <ligand>
        <name>Fe cation</name>
        <dbReference type="ChEBI" id="CHEBI:24875"/>
    </ligand>
</feature>
<feature type="binding site" evidence="3 5 10 11 12 13 14 15 16 17 18 19 20 21 22 23 24 25 26">
    <location>
        <position position="213"/>
    </location>
    <ligand>
        <name>Fe cation</name>
        <dbReference type="ChEBI" id="CHEBI:24875"/>
    </ligand>
</feature>
<feature type="binding site" evidence="3 5 10 11 12 13 14 15 16 17 18 19 20 21 22 23 24 25 26">
    <location>
        <position position="362"/>
    </location>
    <ligand>
        <name>Fe cation</name>
        <dbReference type="ChEBI" id="CHEBI:24875"/>
    </ligand>
</feature>
<feature type="mutagenesis site" description="Changes the regioselectivity of the product for naphthalene, phenanthrene and biphenyl." evidence="3">
    <original>F</original>
    <variation>V</variation>
    <location>
        <position position="352"/>
    </location>
</feature>
<feature type="turn" evidence="27">
    <location>
        <begin position="3"/>
        <end position="5"/>
    </location>
</feature>
<feature type="helix" evidence="27">
    <location>
        <begin position="11"/>
        <end position="13"/>
    </location>
</feature>
<feature type="strand" evidence="27">
    <location>
        <begin position="15"/>
        <end position="17"/>
    </location>
</feature>
<feature type="helix" evidence="27">
    <location>
        <begin position="18"/>
        <end position="21"/>
    </location>
</feature>
<feature type="helix" evidence="27">
    <location>
        <begin position="24"/>
        <end position="33"/>
    </location>
</feature>
<feature type="turn" evidence="27">
    <location>
        <begin position="34"/>
        <end position="37"/>
    </location>
</feature>
<feature type="strand" evidence="27">
    <location>
        <begin position="40"/>
        <end position="44"/>
    </location>
</feature>
<feature type="helix" evidence="27">
    <location>
        <begin position="45"/>
        <end position="47"/>
    </location>
</feature>
<feature type="strand" evidence="27">
    <location>
        <begin position="53"/>
        <end position="59"/>
    </location>
</feature>
<feature type="strand" evidence="27">
    <location>
        <begin position="62"/>
        <end position="68"/>
    </location>
</feature>
<feature type="strand" evidence="27">
    <location>
        <begin position="74"/>
        <end position="80"/>
    </location>
</feature>
<feature type="turn" evidence="27">
    <location>
        <begin position="82"/>
        <end position="84"/>
    </location>
</feature>
<feature type="strand" evidence="27">
    <location>
        <begin position="91"/>
        <end position="95"/>
    </location>
</feature>
<feature type="strand" evidence="27">
    <location>
        <begin position="97"/>
        <end position="100"/>
    </location>
</feature>
<feature type="turn" evidence="27">
    <location>
        <begin position="102"/>
        <end position="104"/>
    </location>
</feature>
<feature type="strand" evidence="27">
    <location>
        <begin position="107"/>
        <end position="109"/>
    </location>
</feature>
<feature type="strand" evidence="27">
    <location>
        <begin position="114"/>
        <end position="116"/>
    </location>
</feature>
<feature type="helix" evidence="27">
    <location>
        <begin position="120"/>
        <end position="123"/>
    </location>
</feature>
<feature type="turn" evidence="27">
    <location>
        <begin position="124"/>
        <end position="126"/>
    </location>
</feature>
<feature type="helix" evidence="27">
    <location>
        <begin position="130"/>
        <end position="132"/>
    </location>
</feature>
<feature type="strand" evidence="27">
    <location>
        <begin position="139"/>
        <end position="144"/>
    </location>
</feature>
<feature type="strand" evidence="27">
    <location>
        <begin position="147"/>
        <end position="152"/>
    </location>
</feature>
<feature type="helix" evidence="27">
    <location>
        <begin position="159"/>
        <end position="163"/>
    </location>
</feature>
<feature type="helix" evidence="27">
    <location>
        <begin position="166"/>
        <end position="174"/>
    </location>
</feature>
<feature type="turn" evidence="27">
    <location>
        <begin position="175"/>
        <end position="177"/>
    </location>
</feature>
<feature type="strand" evidence="27">
    <location>
        <begin position="180"/>
        <end position="193"/>
    </location>
</feature>
<feature type="helix" evidence="27">
    <location>
        <begin position="196"/>
        <end position="204"/>
    </location>
</feature>
<feature type="helix" evidence="27">
    <location>
        <begin position="209"/>
        <end position="212"/>
    </location>
</feature>
<feature type="helix" evidence="27">
    <location>
        <begin position="214"/>
        <end position="220"/>
    </location>
</feature>
<feature type="helix" evidence="27">
    <location>
        <begin position="225"/>
        <end position="230"/>
    </location>
</feature>
<feature type="strand" evidence="27">
    <location>
        <begin position="238"/>
        <end position="243"/>
    </location>
</feature>
<feature type="strand" evidence="27">
    <location>
        <begin position="249"/>
        <end position="253"/>
    </location>
</feature>
<feature type="turn" evidence="27">
    <location>
        <begin position="257"/>
        <end position="260"/>
    </location>
</feature>
<feature type="turn" evidence="27">
    <location>
        <begin position="263"/>
        <end position="265"/>
    </location>
</feature>
<feature type="helix" evidence="27">
    <location>
        <begin position="266"/>
        <end position="284"/>
    </location>
</feature>
<feature type="helix" evidence="27">
    <location>
        <begin position="286"/>
        <end position="292"/>
    </location>
</feature>
<feature type="strand" evidence="27">
    <location>
        <begin position="294"/>
        <end position="300"/>
    </location>
</feature>
<feature type="turn" evidence="27">
    <location>
        <begin position="301"/>
        <end position="303"/>
    </location>
</feature>
<feature type="strand" evidence="27">
    <location>
        <begin position="304"/>
        <end position="307"/>
    </location>
</feature>
<feature type="turn" evidence="27">
    <location>
        <begin position="308"/>
        <end position="311"/>
    </location>
</feature>
<feature type="strand" evidence="27">
    <location>
        <begin position="312"/>
        <end position="320"/>
    </location>
</feature>
<feature type="strand" evidence="27">
    <location>
        <begin position="323"/>
        <end position="333"/>
    </location>
</feature>
<feature type="helix" evidence="27">
    <location>
        <begin position="338"/>
        <end position="352"/>
    </location>
</feature>
<feature type="helix" evidence="27">
    <location>
        <begin position="357"/>
        <end position="372"/>
    </location>
</feature>
<feature type="turn" evidence="27">
    <location>
        <begin position="376"/>
        <end position="380"/>
    </location>
</feature>
<feature type="strand" evidence="27">
    <location>
        <begin position="382"/>
        <end position="384"/>
    </location>
</feature>
<feature type="turn" evidence="27">
    <location>
        <begin position="387"/>
        <end position="390"/>
    </location>
</feature>
<feature type="strand" evidence="27">
    <location>
        <begin position="393"/>
        <end position="395"/>
    </location>
</feature>
<feature type="strand" evidence="27">
    <location>
        <begin position="397"/>
        <end position="399"/>
    </location>
</feature>
<feature type="strand" evidence="27">
    <location>
        <begin position="401"/>
        <end position="410"/>
    </location>
</feature>
<feature type="helix" evidence="27">
    <location>
        <begin position="411"/>
        <end position="424"/>
    </location>
</feature>
<feature type="helix" evidence="27">
    <location>
        <begin position="429"/>
        <end position="434"/>
    </location>
</feature>
<feature type="turn" evidence="27">
    <location>
        <begin position="435"/>
        <end position="438"/>
    </location>
</feature>
<feature type="helix" evidence="27">
    <location>
        <begin position="439"/>
        <end position="444"/>
    </location>
</feature>